<sequence length="284" mass="29973">MAGGDNNSQTTNGGSGHEQRAMEEGRKQEEFAADGQGCGLAFSVPFIQKIIAEIFGTYFLIFAGCGAVTINQSKNGQITFPGVAIVWGLAVMVMVYAVGHISGAHFNPAVTLAFATCRRFPWRQVPAYAAAQMLGATLAAGTLRLMFGGRHEHFPGTLPAGSDVQSLVLEFIITFYLMFVISGVATDNRAIGELAGLAVGATILLNVLIAGPISGASMNPARSLGPAMIGGEYRSIWVYIVGPVAGAVAGAWAYNIIRFTNKPLREITKSGSFLKSMNRMNSST</sequence>
<feature type="chain" id="PRO_0000286026" description="Aquaporin NIP1-1">
    <location>
        <begin position="1"/>
        <end position="284"/>
    </location>
</feature>
<feature type="transmembrane region" description="Helical; Name=1" evidence="2">
    <location>
        <begin position="50"/>
        <end position="70"/>
    </location>
</feature>
<feature type="transmembrane region" description="Helical; Name=2" evidence="2">
    <location>
        <begin position="78"/>
        <end position="98"/>
    </location>
</feature>
<feature type="transmembrane region" description="Helical; Name=3" evidence="2">
    <location>
        <begin position="129"/>
        <end position="149"/>
    </location>
</feature>
<feature type="transmembrane region" description="Helical; Name=4" evidence="2">
    <location>
        <begin position="166"/>
        <end position="186"/>
    </location>
</feature>
<feature type="transmembrane region" description="Helical; Name=5" evidence="2">
    <location>
        <begin position="194"/>
        <end position="214"/>
    </location>
</feature>
<feature type="transmembrane region" description="Helical; Name=6" evidence="2">
    <location>
        <begin position="236"/>
        <end position="256"/>
    </location>
</feature>
<feature type="region of interest" description="Disordered" evidence="3">
    <location>
        <begin position="1"/>
        <end position="28"/>
    </location>
</feature>
<feature type="short sequence motif" description="NPA 1">
    <location>
        <begin position="107"/>
        <end position="109"/>
    </location>
</feature>
<feature type="short sequence motif" description="NPA 2">
    <location>
        <begin position="219"/>
        <end position="221"/>
    </location>
</feature>
<feature type="compositionally biased region" description="Polar residues" evidence="3">
    <location>
        <begin position="1"/>
        <end position="12"/>
    </location>
</feature>
<feature type="compositionally biased region" description="Basic and acidic residues" evidence="3">
    <location>
        <begin position="17"/>
        <end position="28"/>
    </location>
</feature>
<dbReference type="EMBL" id="D17443">
    <property type="protein sequence ID" value="BAA04257.1"/>
    <property type="molecule type" value="mRNA"/>
</dbReference>
<dbReference type="EMBL" id="AP004070">
    <property type="protein sequence ID" value="BAD27715.1"/>
    <property type="molecule type" value="Genomic_DNA"/>
</dbReference>
<dbReference type="EMBL" id="AP008208">
    <property type="protein sequence ID" value="BAF08289.1"/>
    <property type="molecule type" value="Genomic_DNA"/>
</dbReference>
<dbReference type="EMBL" id="AP014958">
    <property type="protein sequence ID" value="BAS77793.1"/>
    <property type="molecule type" value="Genomic_DNA"/>
</dbReference>
<dbReference type="EMBL" id="AK068806">
    <property type="status" value="NOT_ANNOTATED_CDS"/>
    <property type="molecule type" value="mRNA"/>
</dbReference>
<dbReference type="PIR" id="S52003">
    <property type="entry name" value="S52003"/>
</dbReference>
<dbReference type="RefSeq" id="XP_015623151.1">
    <property type="nucleotide sequence ID" value="XM_015767665.1"/>
</dbReference>
<dbReference type="SMR" id="Q40746"/>
<dbReference type="FunCoup" id="Q40746">
    <property type="interactions" value="17"/>
</dbReference>
<dbReference type="STRING" id="39947.Q40746"/>
<dbReference type="PaxDb" id="39947-Q40746"/>
<dbReference type="EnsemblPlants" id="Os02t0232900-01">
    <property type="protein sequence ID" value="Os02t0232900-01"/>
    <property type="gene ID" value="Os02g0232900"/>
</dbReference>
<dbReference type="Gramene" id="Os02t0232900-01">
    <property type="protein sequence ID" value="Os02t0232900-01"/>
    <property type="gene ID" value="Os02g0232900"/>
</dbReference>
<dbReference type="KEGG" id="dosa:Os02g0232900"/>
<dbReference type="eggNOG" id="KOG0223">
    <property type="taxonomic scope" value="Eukaryota"/>
</dbReference>
<dbReference type="HOGENOM" id="CLU_020019_3_1_1"/>
<dbReference type="InParanoid" id="Q40746"/>
<dbReference type="OMA" id="WGFAVLT"/>
<dbReference type="OrthoDB" id="3222at2759"/>
<dbReference type="PlantReactome" id="R-OSA-9618218">
    <property type="pathway name" value="Arsenic uptake and detoxification"/>
</dbReference>
<dbReference type="Proteomes" id="UP000000763">
    <property type="component" value="Chromosome 2"/>
</dbReference>
<dbReference type="Proteomes" id="UP000059680">
    <property type="component" value="Chromosome 2"/>
</dbReference>
<dbReference type="ExpressionAtlas" id="Q40746">
    <property type="expression patterns" value="baseline and differential"/>
</dbReference>
<dbReference type="GO" id="GO:0016020">
    <property type="term" value="C:membrane"/>
    <property type="evidence" value="ECO:0007669"/>
    <property type="project" value="UniProtKB-SubCell"/>
</dbReference>
<dbReference type="GO" id="GO:0015267">
    <property type="term" value="F:channel activity"/>
    <property type="evidence" value="ECO:0007669"/>
    <property type="project" value="InterPro"/>
</dbReference>
<dbReference type="CDD" id="cd00333">
    <property type="entry name" value="MIP"/>
    <property type="match status" value="1"/>
</dbReference>
<dbReference type="FunFam" id="1.20.1080.10:FF:000029">
    <property type="entry name" value="Aquaporin NIP1-1"/>
    <property type="match status" value="1"/>
</dbReference>
<dbReference type="Gene3D" id="1.20.1080.10">
    <property type="entry name" value="Glycerol uptake facilitator protein"/>
    <property type="match status" value="1"/>
</dbReference>
<dbReference type="InterPro" id="IPR023271">
    <property type="entry name" value="Aquaporin-like"/>
</dbReference>
<dbReference type="InterPro" id="IPR034294">
    <property type="entry name" value="Aquaporin_transptr"/>
</dbReference>
<dbReference type="InterPro" id="IPR000425">
    <property type="entry name" value="MIP"/>
</dbReference>
<dbReference type="InterPro" id="IPR022357">
    <property type="entry name" value="MIP_CS"/>
</dbReference>
<dbReference type="NCBIfam" id="TIGR00861">
    <property type="entry name" value="MIP"/>
    <property type="match status" value="1"/>
</dbReference>
<dbReference type="PANTHER" id="PTHR45724:SF13">
    <property type="entry name" value="AQUAPORIN NIP1-1-RELATED"/>
    <property type="match status" value="1"/>
</dbReference>
<dbReference type="PANTHER" id="PTHR45724">
    <property type="entry name" value="AQUAPORIN NIP2-1"/>
    <property type="match status" value="1"/>
</dbReference>
<dbReference type="Pfam" id="PF00230">
    <property type="entry name" value="MIP"/>
    <property type="match status" value="1"/>
</dbReference>
<dbReference type="PRINTS" id="PR00783">
    <property type="entry name" value="MINTRINSICP"/>
</dbReference>
<dbReference type="SUPFAM" id="SSF81338">
    <property type="entry name" value="Aquaporin-like"/>
    <property type="match status" value="1"/>
</dbReference>
<dbReference type="PROSITE" id="PS00221">
    <property type="entry name" value="MIP"/>
    <property type="match status" value="1"/>
</dbReference>
<proteinExistence type="evidence at transcript level"/>
<keyword id="KW-0472">Membrane</keyword>
<keyword id="KW-1185">Reference proteome</keyword>
<keyword id="KW-0677">Repeat</keyword>
<keyword id="KW-0812">Transmembrane</keyword>
<keyword id="KW-1133">Transmembrane helix</keyword>
<keyword id="KW-0813">Transport</keyword>
<reference key="1">
    <citation type="journal article" date="1994" name="Plant Mol. Biol.">
        <title>Isolation and expression analysis of two rice genes encoding the major intrinsic protein.</title>
        <authorList>
            <person name="Liu Q."/>
            <person name="Umeda M."/>
            <person name="Uchimiya H."/>
        </authorList>
    </citation>
    <scope>NUCLEOTIDE SEQUENCE [MRNA]</scope>
    <scope>TISSUE SPECIFICITY</scope>
    <scope>INDUCTION</scope>
    <source>
        <tissue>Callus</tissue>
    </source>
</reference>
<reference key="2">
    <citation type="journal article" date="2005" name="Nature">
        <title>The map-based sequence of the rice genome.</title>
        <authorList>
            <consortium name="International rice genome sequencing project (IRGSP)"/>
        </authorList>
    </citation>
    <scope>NUCLEOTIDE SEQUENCE [LARGE SCALE GENOMIC DNA]</scope>
    <source>
        <strain>cv. Nipponbare</strain>
    </source>
</reference>
<reference key="3">
    <citation type="journal article" date="2008" name="Nucleic Acids Res.">
        <title>The rice annotation project database (RAP-DB): 2008 update.</title>
        <authorList>
            <consortium name="The rice annotation project (RAP)"/>
        </authorList>
    </citation>
    <scope>GENOME REANNOTATION</scope>
    <source>
        <strain>cv. Nipponbare</strain>
    </source>
</reference>
<reference key="4">
    <citation type="journal article" date="2013" name="Rice">
        <title>Improvement of the Oryza sativa Nipponbare reference genome using next generation sequence and optical map data.</title>
        <authorList>
            <person name="Kawahara Y."/>
            <person name="de la Bastide M."/>
            <person name="Hamilton J.P."/>
            <person name="Kanamori H."/>
            <person name="McCombie W.R."/>
            <person name="Ouyang S."/>
            <person name="Schwartz D.C."/>
            <person name="Tanaka T."/>
            <person name="Wu J."/>
            <person name="Zhou S."/>
            <person name="Childs K.L."/>
            <person name="Davidson R.M."/>
            <person name="Lin H."/>
            <person name="Quesada-Ocampo L."/>
            <person name="Vaillancourt B."/>
            <person name="Sakai H."/>
            <person name="Lee S.S."/>
            <person name="Kim J."/>
            <person name="Numa H."/>
            <person name="Itoh T."/>
            <person name="Buell C.R."/>
            <person name="Matsumoto T."/>
        </authorList>
    </citation>
    <scope>GENOME REANNOTATION</scope>
    <source>
        <strain>cv. Nipponbare</strain>
    </source>
</reference>
<reference key="5">
    <citation type="journal article" date="2003" name="Science">
        <title>Collection, mapping, and annotation of over 28,000 cDNA clones from japonica rice.</title>
        <authorList>
            <consortium name="The rice full-length cDNA consortium"/>
        </authorList>
    </citation>
    <scope>NUCLEOTIDE SEQUENCE [LARGE SCALE MRNA]</scope>
    <source>
        <strain>cv. Nipponbare</strain>
    </source>
</reference>
<reference key="6">
    <citation type="journal article" date="2005" name="Plant Cell Physiol.">
        <title>Identification of 33 rice aquaporin genes and analysis of their expression and function.</title>
        <authorList>
            <person name="Sakurai J."/>
            <person name="Ishikawa F."/>
            <person name="Yamaguchi T."/>
            <person name="Uemura M."/>
            <person name="Maeshima M."/>
        </authorList>
    </citation>
    <scope>NOMENCLATURE</scope>
    <scope>TISSUE SPECIFICITY</scope>
</reference>
<protein>
    <recommendedName>
        <fullName>Aquaporin NIP1-1</fullName>
    </recommendedName>
    <alternativeName>
        <fullName>NOD26-like intrinsic protein 1-1</fullName>
    </alternativeName>
    <alternativeName>
        <fullName>OsNIP1;1</fullName>
    </alternativeName>
</protein>
<accession>Q40746</accession>
<accession>Q6EUF4</accession>
<name>NIP11_ORYSJ</name>
<evidence type="ECO:0000250" key="1"/>
<evidence type="ECO:0000255" key="2"/>
<evidence type="ECO:0000256" key="3">
    <source>
        <dbReference type="SAM" id="MobiDB-lite"/>
    </source>
</evidence>
<evidence type="ECO:0000269" key="4">
    <source>
    </source>
</evidence>
<evidence type="ECO:0000269" key="5">
    <source>
    </source>
</evidence>
<evidence type="ECO:0000305" key="6"/>
<comment type="function">
    <text evidence="1">Aquaporins facilitate the transport of water and small neutral solutes across cell membranes.</text>
</comment>
<comment type="subcellular location">
    <subcellularLocation>
        <location evidence="6">Membrane</location>
        <topology evidence="6">Multi-pass membrane protein</topology>
    </subcellularLocation>
</comment>
<comment type="tissue specificity">
    <text evidence="4 5">Expressed in leaves and at lower levels in roots and anthers.</text>
</comment>
<comment type="induction">
    <text evidence="5">By abscisic acid (ABA).</text>
</comment>
<comment type="domain">
    <text>Aquaporins contain two tandem repeats each containing three membrane-spanning domains and a pore-forming loop with the signature motif Asn-Pro-Ala (NPA).</text>
</comment>
<comment type="similarity">
    <text evidence="6">Belongs to the MIP/aquaporin (TC 1.A.8) family. NIP (TC 1.A.8.12) subfamily.</text>
</comment>
<organism>
    <name type="scientific">Oryza sativa subsp. japonica</name>
    <name type="common">Rice</name>
    <dbReference type="NCBI Taxonomy" id="39947"/>
    <lineage>
        <taxon>Eukaryota</taxon>
        <taxon>Viridiplantae</taxon>
        <taxon>Streptophyta</taxon>
        <taxon>Embryophyta</taxon>
        <taxon>Tracheophyta</taxon>
        <taxon>Spermatophyta</taxon>
        <taxon>Magnoliopsida</taxon>
        <taxon>Liliopsida</taxon>
        <taxon>Poales</taxon>
        <taxon>Poaceae</taxon>
        <taxon>BOP clade</taxon>
        <taxon>Oryzoideae</taxon>
        <taxon>Oryzeae</taxon>
        <taxon>Oryzinae</taxon>
        <taxon>Oryza</taxon>
        <taxon>Oryza sativa</taxon>
    </lineage>
</organism>
<gene>
    <name type="primary">NIP1-1</name>
    <name type="synonym">rMIP1</name>
    <name type="synonym">YK347</name>
    <name type="ordered locus">Os02g0232900</name>
    <name type="ordered locus">LOC_Os02g13870</name>
    <name type="ORF">OJ1705_E12.32</name>
</gene>